<accession>P20576</accession>
<dbReference type="EC" id="4.1.3.27"/>
<dbReference type="EMBL" id="M33814">
    <property type="protein sequence ID" value="AAA25823.1"/>
    <property type="molecule type" value="Genomic_DNA"/>
</dbReference>
<dbReference type="EMBL" id="AE004091">
    <property type="protein sequence ID" value="AAG04038.1"/>
    <property type="molecule type" value="Genomic_DNA"/>
</dbReference>
<dbReference type="PIR" id="A35114">
    <property type="entry name" value="A35114"/>
</dbReference>
<dbReference type="PIR" id="G83563">
    <property type="entry name" value="G83563"/>
</dbReference>
<dbReference type="RefSeq" id="NP_249340.1">
    <property type="nucleotide sequence ID" value="NC_002516.2"/>
</dbReference>
<dbReference type="RefSeq" id="WP_003113175.1">
    <property type="nucleotide sequence ID" value="NZ_QZGE01000010.1"/>
</dbReference>
<dbReference type="SMR" id="P20576"/>
<dbReference type="FunCoup" id="P20576">
    <property type="interactions" value="328"/>
</dbReference>
<dbReference type="STRING" id="208964.PA0649"/>
<dbReference type="MEROPS" id="C26.955"/>
<dbReference type="PaxDb" id="208964-PA0649"/>
<dbReference type="DNASU" id="878400"/>
<dbReference type="GeneID" id="878400"/>
<dbReference type="KEGG" id="pae:PA0649"/>
<dbReference type="PATRIC" id="fig|208964.12.peg.680"/>
<dbReference type="PseudoCAP" id="PA0649"/>
<dbReference type="HOGENOM" id="CLU_014340_1_2_6"/>
<dbReference type="InParanoid" id="P20576"/>
<dbReference type="OrthoDB" id="9786812at2"/>
<dbReference type="PhylomeDB" id="P20576"/>
<dbReference type="BioCyc" id="MetaCyc:MONOMER-16006"/>
<dbReference type="BioCyc" id="PAER208964:G1FZ6-654-MONOMER"/>
<dbReference type="BRENDA" id="4.1.3.27">
    <property type="organism ID" value="5087"/>
</dbReference>
<dbReference type="UniPathway" id="UPA00035">
    <property type="reaction ID" value="UER00040"/>
</dbReference>
<dbReference type="Proteomes" id="UP000002438">
    <property type="component" value="Chromosome"/>
</dbReference>
<dbReference type="GO" id="GO:0046820">
    <property type="term" value="F:4-amino-4-deoxychorismate synthase activity"/>
    <property type="evidence" value="ECO:0000318"/>
    <property type="project" value="GO_Central"/>
</dbReference>
<dbReference type="GO" id="GO:0004049">
    <property type="term" value="F:anthranilate synthase activity"/>
    <property type="evidence" value="ECO:0000315"/>
    <property type="project" value="PseudoCAP"/>
</dbReference>
<dbReference type="GO" id="GO:0000162">
    <property type="term" value="P:L-tryptophan biosynthetic process"/>
    <property type="evidence" value="ECO:0000315"/>
    <property type="project" value="PseudoCAP"/>
</dbReference>
<dbReference type="GO" id="GO:0046654">
    <property type="term" value="P:tetrahydrofolate biosynthetic process"/>
    <property type="evidence" value="ECO:0000318"/>
    <property type="project" value="GO_Central"/>
</dbReference>
<dbReference type="CDD" id="cd01743">
    <property type="entry name" value="GATase1_Anthranilate_Synthase"/>
    <property type="match status" value="1"/>
</dbReference>
<dbReference type="FunFam" id="3.40.50.880:FF:000003">
    <property type="entry name" value="Anthranilate synthase component II"/>
    <property type="match status" value="1"/>
</dbReference>
<dbReference type="Gene3D" id="3.40.50.880">
    <property type="match status" value="1"/>
</dbReference>
<dbReference type="InterPro" id="IPR050472">
    <property type="entry name" value="Anth_synth/Amidotransfase"/>
</dbReference>
<dbReference type="InterPro" id="IPR029062">
    <property type="entry name" value="Class_I_gatase-like"/>
</dbReference>
<dbReference type="InterPro" id="IPR017926">
    <property type="entry name" value="GATASE"/>
</dbReference>
<dbReference type="InterPro" id="IPR006221">
    <property type="entry name" value="TrpG/PapA_dom"/>
</dbReference>
<dbReference type="NCBIfam" id="NF006462">
    <property type="entry name" value="PRK08857.1"/>
    <property type="match status" value="1"/>
</dbReference>
<dbReference type="NCBIfam" id="TIGR00566">
    <property type="entry name" value="trpG_papA"/>
    <property type="match status" value="1"/>
</dbReference>
<dbReference type="PANTHER" id="PTHR43418:SF4">
    <property type="entry name" value="MULTIFUNCTIONAL TRYPTOPHAN BIOSYNTHESIS PROTEIN"/>
    <property type="match status" value="1"/>
</dbReference>
<dbReference type="PANTHER" id="PTHR43418">
    <property type="entry name" value="MULTIFUNCTIONAL TRYPTOPHAN BIOSYNTHESIS PROTEIN-RELATED"/>
    <property type="match status" value="1"/>
</dbReference>
<dbReference type="Pfam" id="PF00117">
    <property type="entry name" value="GATase"/>
    <property type="match status" value="1"/>
</dbReference>
<dbReference type="PRINTS" id="PR00097">
    <property type="entry name" value="ANTSNTHASEII"/>
</dbReference>
<dbReference type="PRINTS" id="PR00099">
    <property type="entry name" value="CPSGATASE"/>
</dbReference>
<dbReference type="PRINTS" id="PR00096">
    <property type="entry name" value="GATASE"/>
</dbReference>
<dbReference type="SUPFAM" id="SSF52317">
    <property type="entry name" value="Class I glutamine amidotransferase-like"/>
    <property type="match status" value="1"/>
</dbReference>
<dbReference type="PROSITE" id="PS51273">
    <property type="entry name" value="GATASE_TYPE_1"/>
    <property type="match status" value="1"/>
</dbReference>
<proteinExistence type="evidence at protein level"/>
<sequence length="201" mass="22046">MLLMIDNYDSFTYNLVQYFGELKAEVKVVRNDELSVEQIEALAPERIVLSPGPCTPNEAGVSLAVIERFAGKLPLLGVCLGHQSIGQAFGGEVVRARQVMHGKTSPIHHKDLGVFAGLANPLTVTRYHSLVVKRESLPECLEVTAWTQHADGSLDEIMGVRHKTLNVEGVQFHPESILTEQGHELLANFLRQQGGVRGEGN</sequence>
<evidence type="ECO:0000250" key="1">
    <source>
        <dbReference type="UniProtKB" id="P00900"/>
    </source>
</evidence>
<evidence type="ECO:0000255" key="2">
    <source>
        <dbReference type="PROSITE-ProRule" id="PRU00605"/>
    </source>
</evidence>
<evidence type="ECO:0000269" key="3">
    <source>
    </source>
</evidence>
<evidence type="ECO:0000269" key="4">
    <source>
    </source>
</evidence>
<evidence type="ECO:0000269" key="5">
    <source>
    </source>
</evidence>
<evidence type="ECO:0000303" key="6">
    <source>
    </source>
</evidence>
<evidence type="ECO:0000305" key="7"/>
<evidence type="ECO:0000305" key="8">
    <source>
    </source>
</evidence>
<reference key="1">
    <citation type="journal article" date="1990" name="J. Bacteriol.">
        <title>DNA sequences and characterization of four early genes of the tryptophan pathway in Pseudomonas aeruginosa.</title>
        <authorList>
            <person name="Essar D.W."/>
            <person name="Eberly L."/>
            <person name="Han C.Y."/>
            <person name="Crawford I.P."/>
        </authorList>
    </citation>
    <scope>NUCLEOTIDE SEQUENCE [GENOMIC DNA]</scope>
    <scope>FUNCTION</scope>
    <scope>PATHWAY</scope>
    <scope>DISRUPTION PHENOTYPE</scope>
</reference>
<reference key="2">
    <citation type="journal article" date="2000" name="Nature">
        <title>Complete genome sequence of Pseudomonas aeruginosa PAO1, an opportunistic pathogen.</title>
        <authorList>
            <person name="Stover C.K."/>
            <person name="Pham X.-Q.T."/>
            <person name="Erwin A.L."/>
            <person name="Mizoguchi S.D."/>
            <person name="Warrener P."/>
            <person name="Hickey M.J."/>
            <person name="Brinkman F.S.L."/>
            <person name="Hufnagle W.O."/>
            <person name="Kowalik D.J."/>
            <person name="Lagrou M."/>
            <person name="Garber R.L."/>
            <person name="Goltry L."/>
            <person name="Tolentino E."/>
            <person name="Westbrock-Wadman S."/>
            <person name="Yuan Y."/>
            <person name="Brody L.L."/>
            <person name="Coulter S.N."/>
            <person name="Folger K.R."/>
            <person name="Kas A."/>
            <person name="Larbig K."/>
            <person name="Lim R.M."/>
            <person name="Smith K.A."/>
            <person name="Spencer D.H."/>
            <person name="Wong G.K.-S."/>
            <person name="Wu Z."/>
            <person name="Paulsen I.T."/>
            <person name="Reizer J."/>
            <person name="Saier M.H. Jr."/>
            <person name="Hancock R.E.W."/>
            <person name="Lory S."/>
            <person name="Olson M.V."/>
        </authorList>
    </citation>
    <scope>NUCLEOTIDE SEQUENCE [LARGE SCALE GENOMIC DNA]</scope>
    <source>
        <strain>ATCC 15692 / DSM 22644 / CIP 104116 / JCM 14847 / LMG 12228 / 1C / PRS 101 / PAO1</strain>
    </source>
</reference>
<reference key="3">
    <citation type="journal article" date="1990" name="J. Bacteriol.">
        <title>Identification and characterization of genes for a second anthranilate synthase in Pseudomonas aeruginosa: interchangeability of the two anthranilate synthases and evolutionary implications.</title>
        <authorList>
            <person name="Essar D.W."/>
            <person name="Eberly L."/>
            <person name="Hadero A."/>
            <person name="Crawford I.P."/>
        </authorList>
    </citation>
    <scope>INDUCTION</scope>
    <source>
        <strain>ATCC 15692 / DSM 22644 / CIP 104116 / JCM 14847 / LMG 12228 / 1C / PRS 101 / PAO1</strain>
        <strain>PAC174</strain>
    </source>
</reference>
<reference key="4">
    <citation type="journal article" date="2013" name="Microbiology">
        <title>The role of two Pseudomonas aeruginosa anthranilate synthases in tryptophan and quorum signal production.</title>
        <authorList>
            <person name="Palmer G.C."/>
            <person name="Jorth P.A."/>
            <person name="Whiteley M."/>
        </authorList>
    </citation>
    <scope>FUNCTION IN TRYPTOPHAN BIOSYNTHESIS</scope>
    <source>
        <strain>UCBPP-PA14</strain>
    </source>
</reference>
<comment type="function">
    <text evidence="1 3 5">Part of a heterotetrameric complex that catalyzes the two-step biosynthesis of anthranilate, an intermediate in the biosynthesis of L-tryptophan (PubMed:2105306, PubMed:23449919). In the first step, the glutamine-binding beta subunit (TrpG) of anthranilate synthase (AS) provides the glutamine amidotransferase activity which generates ammonia as a substrate that, along with chorismate, is used in the second step, catalyzed by the large alpha subunit of AS (TrpE) to produce anthranilate. In the absence of TrpG, TrpE can synthesize anthranilate directly from chorismate and high concentrations of ammonia (By similarity).</text>
</comment>
<comment type="catalytic activity">
    <reaction>
        <text>chorismate + L-glutamine = anthranilate + pyruvate + L-glutamate + H(+)</text>
        <dbReference type="Rhea" id="RHEA:21732"/>
        <dbReference type="ChEBI" id="CHEBI:15361"/>
        <dbReference type="ChEBI" id="CHEBI:15378"/>
        <dbReference type="ChEBI" id="CHEBI:16567"/>
        <dbReference type="ChEBI" id="CHEBI:29748"/>
        <dbReference type="ChEBI" id="CHEBI:29985"/>
        <dbReference type="ChEBI" id="CHEBI:58359"/>
        <dbReference type="EC" id="4.1.3.27"/>
    </reaction>
</comment>
<comment type="pathway">
    <text evidence="5 8">Amino-acid biosynthesis; L-tryptophan biosynthesis; L-tryptophan from chorismate: step 1/5.</text>
</comment>
<comment type="subunit">
    <text evidence="1">Heterotetramer consisting of two non-identical subunits: a beta subunit (TrpG) and a large alpha subunit (TrpE).</text>
</comment>
<comment type="induction">
    <text evidence="4">Expression decreases as cell grow from early to late log phase and further decreases in stationary phase; there is about 5-fold less mRNA in stationary than early log phase.</text>
</comment>
<comment type="disruption phenotype">
    <text evidence="3">Cells lacking this gene fail to grow on low-ammonia medium but grew on high-ammonium medium.</text>
</comment>
<feature type="chain" id="PRO_0000056895" description="Anthranilate synthase component 2">
    <location>
        <begin position="1"/>
        <end position="201"/>
    </location>
</feature>
<feature type="domain" description="Glutamine amidotransferase type-1" evidence="2">
    <location>
        <begin position="1"/>
        <end position="199"/>
    </location>
</feature>
<feature type="active site" description="Nucleophile; for GATase activity" evidence="2">
    <location>
        <position position="79"/>
    </location>
</feature>
<feature type="active site" description="For GATase activity" evidence="2">
    <location>
        <position position="173"/>
    </location>
</feature>
<feature type="active site" description="For GATase activity" evidence="2">
    <location>
        <position position="175"/>
    </location>
</feature>
<feature type="binding site" evidence="1">
    <location>
        <begin position="52"/>
        <end position="54"/>
    </location>
    <ligand>
        <name>L-glutamine</name>
        <dbReference type="ChEBI" id="CHEBI:58359"/>
    </ligand>
</feature>
<feature type="binding site" evidence="1">
    <location>
        <position position="83"/>
    </location>
    <ligand>
        <name>L-glutamine</name>
        <dbReference type="ChEBI" id="CHEBI:58359"/>
    </ligand>
</feature>
<feature type="binding site" evidence="1">
    <location>
        <begin position="129"/>
        <end position="130"/>
    </location>
    <ligand>
        <name>L-glutamine</name>
        <dbReference type="ChEBI" id="CHEBI:58359"/>
    </ligand>
</feature>
<feature type="sequence conflict" description="In Ref. 1; AAA25823." evidence="7" ref="1">
    <original>I</original>
    <variation>V</variation>
    <location>
        <position position="177"/>
    </location>
</feature>
<organism>
    <name type="scientific">Pseudomonas aeruginosa (strain ATCC 15692 / DSM 22644 / CIP 104116 / JCM 14847 / LMG 12228 / 1C / PRS 101 / PAO1)</name>
    <dbReference type="NCBI Taxonomy" id="208964"/>
    <lineage>
        <taxon>Bacteria</taxon>
        <taxon>Pseudomonadati</taxon>
        <taxon>Pseudomonadota</taxon>
        <taxon>Gammaproteobacteria</taxon>
        <taxon>Pseudomonadales</taxon>
        <taxon>Pseudomonadaceae</taxon>
        <taxon>Pseudomonas</taxon>
    </lineage>
</organism>
<protein>
    <recommendedName>
        <fullName>Anthranilate synthase component 2</fullName>
        <shortName>AS</shortName>
        <shortName>ASII</shortName>
        <ecNumber>4.1.3.27</ecNumber>
    </recommendedName>
    <alternativeName>
        <fullName>Anthranilate synthase, GATase component</fullName>
    </alternativeName>
    <alternativeName>
        <fullName>Anthranilate synthase, glutamine amidotransferase component</fullName>
    </alternativeName>
</protein>
<gene>
    <name evidence="6" type="primary">trpG</name>
    <name type="ordered locus">PA0649</name>
</gene>
<keyword id="KW-0028">Amino-acid biosynthesis</keyword>
<keyword id="KW-0057">Aromatic amino acid biosynthesis</keyword>
<keyword id="KW-0315">Glutamine amidotransferase</keyword>
<keyword id="KW-0456">Lyase</keyword>
<keyword id="KW-1185">Reference proteome</keyword>
<keyword id="KW-0822">Tryptophan biosynthesis</keyword>
<name>TRPG_PSEAE</name>